<gene>
    <name type="primary">Gprasp3</name>
    <name type="synonym">Bhlhb9</name>
</gene>
<organism>
    <name type="scientific">Rattus norvegicus</name>
    <name type="common">Rat</name>
    <dbReference type="NCBI Taxonomy" id="10116"/>
    <lineage>
        <taxon>Eukaryota</taxon>
        <taxon>Metazoa</taxon>
        <taxon>Chordata</taxon>
        <taxon>Craniata</taxon>
        <taxon>Vertebrata</taxon>
        <taxon>Euteleostomi</taxon>
        <taxon>Mammalia</taxon>
        <taxon>Eutheria</taxon>
        <taxon>Euarchontoglires</taxon>
        <taxon>Glires</taxon>
        <taxon>Rodentia</taxon>
        <taxon>Myomorpha</taxon>
        <taxon>Muroidea</taxon>
        <taxon>Muridae</taxon>
        <taxon>Murinae</taxon>
        <taxon>Rattus</taxon>
    </lineage>
</organism>
<name>GASP3_RAT</name>
<evidence type="ECO:0000250" key="1">
    <source>
        <dbReference type="UniProtKB" id="Q6PB60"/>
    </source>
</evidence>
<evidence type="ECO:0000250" key="2">
    <source>
        <dbReference type="UniProtKB" id="Q6PI77"/>
    </source>
</evidence>
<evidence type="ECO:0000256" key="3">
    <source>
        <dbReference type="SAM" id="MobiDB-lite"/>
    </source>
</evidence>
<evidence type="ECO:0000305" key="4"/>
<protein>
    <recommendedName>
        <fullName>G protein-coupled receptor associated sorting protein 3</fullName>
    </recommendedName>
    <alternativeName>
        <fullName>Protein BHLHb9</fullName>
        <shortName>bHLHb9</shortName>
    </alternativeName>
    <alternativeName>
        <fullName>Transcription regulator of 60 kDa</fullName>
        <shortName>p60TRP</shortName>
    </alternativeName>
</protein>
<reference key="1">
    <citation type="journal article" date="2004" name="J. Cell. Biochem.">
        <title>Characterizing the new transcription regulator protein p60TRP.</title>
        <authorList>
            <person name="Heese K."/>
            <person name="Yamada T."/>
            <person name="Akatsu H."/>
            <person name="Yamamoto T."/>
            <person name="Kosaka K."/>
            <person name="Nagai Y."/>
            <person name="Sawada T."/>
        </authorList>
    </citation>
    <scope>NUCLEOTIDE SEQUENCE [MRNA]</scope>
</reference>
<sequence length="539" mass="59718">MTGSKNKARAQAKLEKRASAQAKAAAEREAANAGRGAGKNRDKGKGKAGSKTDAVAEAKAGSKSKVVAETKEGARPESKAVAKGTSDFNHKAENKYARSARKDKPSSDSWFWAGEDSGINSWFWKGEEVSNNSVAKCENKPSTSIQARVEEHTPRTSHKSRSGAEEEEEENVIGNWFWEGDDTGFDSDPKPVFKIVKPQPVDEINEKDRPKDWSEVTIWPKAPAVTPAVLGYRSQDSSEGRPSSYIVLASNEEETSTTCTKNTRSSLQPIPEYPFGSDPCIQTLDEIRQQIKIREENGIKPFACPCKMECYLDSPEFEKLVNILKSTTDPLIHKIAQIAMGIHKVHPFAQEFINEVGVVTLIESLLSFSSPEVSIKKAVITLNSSGDDRQQMVEFHVKHMCKETVSFPLNSPGQQSGLKIIGQLTTESVHHYIVVSYFSELFHLLSQGNRKTRNLVLKVFLNMSENPKAARDMINMKALAALKLIFNQKEAKANLVSAVAIFINIKEHIRKGSIVVVDHLSYNTLTAIFREVKGIIERM</sequence>
<accession>Q71HP2</accession>
<proteinExistence type="evidence at transcript level"/>
<keyword id="KW-0963">Cytoplasm</keyword>
<keyword id="KW-0539">Nucleus</keyword>
<keyword id="KW-1185">Reference proteome</keyword>
<comment type="function">
    <text evidence="1">Survival and differentiation promoting protein that plays a role in the regulation of neurosynaptogenesis. Induces phosphatase PP2A activity which results in APP dephosphorylation and inhibits BACE1-mediated processing of APP.</text>
</comment>
<comment type="subunit">
    <text evidence="1">Homodimer.</text>
</comment>
<comment type="subcellular location">
    <subcellularLocation>
        <location evidence="2">Cytoplasm</location>
    </subcellularLocation>
    <subcellularLocation>
        <location evidence="2">Nucleus</location>
    </subcellularLocation>
    <text evidence="2">Mainly cytoplasmic, and nuclear at lower level.</text>
</comment>
<comment type="similarity">
    <text evidence="4">Belongs to the GPRASP family.</text>
</comment>
<comment type="caution">
    <text evidence="4">Despite its name, no basic helix-loop-helix (bHLH) domain is detected by any prediction tool.</text>
</comment>
<feature type="chain" id="PRO_0000334665" description="G protein-coupled receptor associated sorting protein 3">
    <location>
        <begin position="1"/>
        <end position="539"/>
    </location>
</feature>
<feature type="region of interest" description="Disordered" evidence="3">
    <location>
        <begin position="1"/>
        <end position="111"/>
    </location>
</feature>
<feature type="region of interest" description="Disordered" evidence="3">
    <location>
        <begin position="132"/>
        <end position="170"/>
    </location>
</feature>
<feature type="compositionally biased region" description="Basic residues" evidence="3">
    <location>
        <begin position="1"/>
        <end position="10"/>
    </location>
</feature>
<feature type="compositionally biased region" description="Basic and acidic residues" evidence="3">
    <location>
        <begin position="66"/>
        <end position="80"/>
    </location>
</feature>
<feature type="compositionally biased region" description="Basic and acidic residues" evidence="3">
    <location>
        <begin position="88"/>
        <end position="106"/>
    </location>
</feature>
<feature type="compositionally biased region" description="Polar residues" evidence="3">
    <location>
        <begin position="132"/>
        <end position="146"/>
    </location>
</feature>
<dbReference type="EMBL" id="AF497483">
    <property type="protein sequence ID" value="AAQ07247.1"/>
    <property type="molecule type" value="mRNA"/>
</dbReference>
<dbReference type="RefSeq" id="NP_997494.1">
    <property type="nucleotide sequence ID" value="NM_207611.3"/>
</dbReference>
<dbReference type="RefSeq" id="XP_006257337.1">
    <property type="nucleotide sequence ID" value="XM_006257275.3"/>
</dbReference>
<dbReference type="RefSeq" id="XP_006257338.1">
    <property type="nucleotide sequence ID" value="XM_006257276.2"/>
</dbReference>
<dbReference type="RefSeq" id="XP_017457556.1">
    <property type="nucleotide sequence ID" value="XM_017602067.1"/>
</dbReference>
<dbReference type="RefSeq" id="XP_017457557.1">
    <property type="nucleotide sequence ID" value="XM_017602068.1"/>
</dbReference>
<dbReference type="SMR" id="Q71HP2"/>
<dbReference type="FunCoup" id="Q71HP2">
    <property type="interactions" value="467"/>
</dbReference>
<dbReference type="STRING" id="10116.ENSRNOP00000042638"/>
<dbReference type="GlyGen" id="Q71HP2">
    <property type="glycosylation" value="1 site"/>
</dbReference>
<dbReference type="PhosphoSitePlus" id="Q71HP2"/>
<dbReference type="PaxDb" id="10116-ENSRNOP00000042638"/>
<dbReference type="Ensembl" id="ENSRNOT00000049375.6">
    <property type="protein sequence ID" value="ENSRNOP00000042638.4"/>
    <property type="gene ID" value="ENSRNOG00000003191.8"/>
</dbReference>
<dbReference type="Ensembl" id="ENSRNOT00000103691.1">
    <property type="protein sequence ID" value="ENSRNOP00000089209.1"/>
    <property type="gene ID" value="ENSRNOG00000003191.8"/>
</dbReference>
<dbReference type="Ensembl" id="ENSRNOT00000108351.1">
    <property type="protein sequence ID" value="ENSRNOP00000080161.1"/>
    <property type="gene ID" value="ENSRNOG00000003191.8"/>
</dbReference>
<dbReference type="Ensembl" id="ENSRNOT00000110806.1">
    <property type="protein sequence ID" value="ENSRNOP00000089980.1"/>
    <property type="gene ID" value="ENSRNOG00000003191.8"/>
</dbReference>
<dbReference type="GeneID" id="317407"/>
<dbReference type="KEGG" id="rno:317407"/>
<dbReference type="UCSC" id="RGD:1303224">
    <property type="organism name" value="rat"/>
</dbReference>
<dbReference type="AGR" id="RGD:1303224"/>
<dbReference type="CTD" id="80823"/>
<dbReference type="RGD" id="1303224">
    <property type="gene designation" value="Gprasp3"/>
</dbReference>
<dbReference type="eggNOG" id="ENOG502RU0K">
    <property type="taxonomic scope" value="Eukaryota"/>
</dbReference>
<dbReference type="GeneTree" id="ENSGT00940000161990"/>
<dbReference type="HOGENOM" id="CLU_036908_0_0_1"/>
<dbReference type="InParanoid" id="Q71HP2"/>
<dbReference type="OMA" id="TWFWAGE"/>
<dbReference type="OrthoDB" id="9524277at2759"/>
<dbReference type="PhylomeDB" id="Q71HP2"/>
<dbReference type="PRO" id="PR:Q71HP2"/>
<dbReference type="Proteomes" id="UP000002494">
    <property type="component" value="Chromosome X"/>
</dbReference>
<dbReference type="Bgee" id="ENSRNOG00000003191">
    <property type="expression patterns" value="Expressed in cerebellum and 19 other cell types or tissues"/>
</dbReference>
<dbReference type="GO" id="GO:0005829">
    <property type="term" value="C:cytosol"/>
    <property type="evidence" value="ECO:0000318"/>
    <property type="project" value="GO_Central"/>
</dbReference>
<dbReference type="GO" id="GO:0005634">
    <property type="term" value="C:nucleus"/>
    <property type="evidence" value="ECO:0000318"/>
    <property type="project" value="GO_Central"/>
</dbReference>
<dbReference type="GO" id="GO:0042803">
    <property type="term" value="F:protein homodimerization activity"/>
    <property type="evidence" value="ECO:0000266"/>
    <property type="project" value="RGD"/>
</dbReference>
<dbReference type="GO" id="GO:0007611">
    <property type="term" value="P:learning or memory"/>
    <property type="evidence" value="ECO:0000266"/>
    <property type="project" value="RGD"/>
</dbReference>
<dbReference type="GO" id="GO:0043524">
    <property type="term" value="P:negative regulation of neuron apoptotic process"/>
    <property type="evidence" value="ECO:0000266"/>
    <property type="project" value="RGD"/>
</dbReference>
<dbReference type="GO" id="GO:0061003">
    <property type="term" value="P:positive regulation of dendritic spine morphogenesis"/>
    <property type="evidence" value="ECO:0000266"/>
    <property type="project" value="RGD"/>
</dbReference>
<dbReference type="GO" id="GO:0050769">
    <property type="term" value="P:positive regulation of neurogenesis"/>
    <property type="evidence" value="ECO:0000266"/>
    <property type="project" value="RGD"/>
</dbReference>
<dbReference type="GO" id="GO:0051965">
    <property type="term" value="P:positive regulation of synapse assembly"/>
    <property type="evidence" value="ECO:0000266"/>
    <property type="project" value="RGD"/>
</dbReference>
<dbReference type="Gene3D" id="1.25.10.10">
    <property type="entry name" value="Leucine-rich Repeat Variant"/>
    <property type="match status" value="1"/>
</dbReference>
<dbReference type="InterPro" id="IPR011989">
    <property type="entry name" value="ARM-like"/>
</dbReference>
<dbReference type="InterPro" id="IPR006911">
    <property type="entry name" value="ARM-rpt_dom"/>
</dbReference>
<dbReference type="InterPro" id="IPR016024">
    <property type="entry name" value="ARM-type_fold"/>
</dbReference>
<dbReference type="InterPro" id="IPR043374">
    <property type="entry name" value="GASP1-3"/>
</dbReference>
<dbReference type="PANTHER" id="PTHR46414:SF2">
    <property type="entry name" value="G PROTEIN-COUPLED RECEPTOR ASSOCIATED SORTING PROTEIN 3"/>
    <property type="match status" value="1"/>
</dbReference>
<dbReference type="PANTHER" id="PTHR46414">
    <property type="entry name" value="PROTEIN BHLHB9-RELATED"/>
    <property type="match status" value="1"/>
</dbReference>
<dbReference type="Pfam" id="PF04826">
    <property type="entry name" value="Arm_2"/>
    <property type="match status" value="1"/>
</dbReference>
<dbReference type="SUPFAM" id="SSF48371">
    <property type="entry name" value="ARM repeat"/>
    <property type="match status" value="1"/>
</dbReference>